<dbReference type="EMBL" id="CP000038">
    <property type="protein sequence ID" value="AAZ89237.1"/>
    <property type="molecule type" value="Genomic_DNA"/>
</dbReference>
<dbReference type="RefSeq" id="WP_000384389.1">
    <property type="nucleotide sequence ID" value="NC_007384.1"/>
</dbReference>
<dbReference type="SMR" id="Q3YZ25"/>
<dbReference type="GeneID" id="93774609"/>
<dbReference type="KEGG" id="ssn:SSON_2609"/>
<dbReference type="HOGENOM" id="CLU_068529_2_0_6"/>
<dbReference type="Proteomes" id="UP000002529">
    <property type="component" value="Chromosome"/>
</dbReference>
<dbReference type="GO" id="GO:1990230">
    <property type="term" value="C:iron-sulfur cluster transfer complex"/>
    <property type="evidence" value="ECO:0007669"/>
    <property type="project" value="TreeGrafter"/>
</dbReference>
<dbReference type="GO" id="GO:0001671">
    <property type="term" value="F:ATPase activator activity"/>
    <property type="evidence" value="ECO:0007669"/>
    <property type="project" value="InterPro"/>
</dbReference>
<dbReference type="GO" id="GO:0051087">
    <property type="term" value="F:protein-folding chaperone binding"/>
    <property type="evidence" value="ECO:0007669"/>
    <property type="project" value="InterPro"/>
</dbReference>
<dbReference type="GO" id="GO:0044571">
    <property type="term" value="P:[2Fe-2S] cluster assembly"/>
    <property type="evidence" value="ECO:0007669"/>
    <property type="project" value="InterPro"/>
</dbReference>
<dbReference type="GO" id="GO:0051259">
    <property type="term" value="P:protein complex oligomerization"/>
    <property type="evidence" value="ECO:0007669"/>
    <property type="project" value="InterPro"/>
</dbReference>
<dbReference type="GO" id="GO:0006457">
    <property type="term" value="P:protein folding"/>
    <property type="evidence" value="ECO:0007669"/>
    <property type="project" value="UniProtKB-UniRule"/>
</dbReference>
<dbReference type="CDD" id="cd06257">
    <property type="entry name" value="DnaJ"/>
    <property type="match status" value="1"/>
</dbReference>
<dbReference type="FunFam" id="1.10.287.110:FF:000008">
    <property type="entry name" value="Co-chaperone protein HscB"/>
    <property type="match status" value="1"/>
</dbReference>
<dbReference type="FunFam" id="1.20.1280.20:FF:000001">
    <property type="entry name" value="Co-chaperone protein HscB"/>
    <property type="match status" value="1"/>
</dbReference>
<dbReference type="Gene3D" id="1.10.287.110">
    <property type="entry name" value="DnaJ domain"/>
    <property type="match status" value="1"/>
</dbReference>
<dbReference type="Gene3D" id="1.20.1280.20">
    <property type="entry name" value="HscB, C-terminal domain"/>
    <property type="match status" value="1"/>
</dbReference>
<dbReference type="HAMAP" id="MF_00682">
    <property type="entry name" value="HscB"/>
    <property type="match status" value="1"/>
</dbReference>
<dbReference type="InterPro" id="IPR001623">
    <property type="entry name" value="DnaJ_domain"/>
</dbReference>
<dbReference type="InterPro" id="IPR004640">
    <property type="entry name" value="HscB"/>
</dbReference>
<dbReference type="InterPro" id="IPR036386">
    <property type="entry name" value="HscB_C_sf"/>
</dbReference>
<dbReference type="InterPro" id="IPR009073">
    <property type="entry name" value="HscB_oligo_C"/>
</dbReference>
<dbReference type="InterPro" id="IPR036869">
    <property type="entry name" value="J_dom_sf"/>
</dbReference>
<dbReference type="NCBIfam" id="TIGR00714">
    <property type="entry name" value="hscB"/>
    <property type="match status" value="1"/>
</dbReference>
<dbReference type="NCBIfam" id="NF003449">
    <property type="entry name" value="PRK05014.1"/>
    <property type="match status" value="1"/>
</dbReference>
<dbReference type="PANTHER" id="PTHR14021">
    <property type="entry name" value="IRON-SULFUR CLUSTER CO-CHAPERONE PROTEIN HSCB"/>
    <property type="match status" value="1"/>
</dbReference>
<dbReference type="PANTHER" id="PTHR14021:SF15">
    <property type="entry name" value="IRON-SULFUR CLUSTER CO-CHAPERONE PROTEIN HSCB"/>
    <property type="match status" value="1"/>
</dbReference>
<dbReference type="Pfam" id="PF07743">
    <property type="entry name" value="HSCB_C"/>
    <property type="match status" value="1"/>
</dbReference>
<dbReference type="SMART" id="SM00271">
    <property type="entry name" value="DnaJ"/>
    <property type="match status" value="1"/>
</dbReference>
<dbReference type="SUPFAM" id="SSF46565">
    <property type="entry name" value="Chaperone J-domain"/>
    <property type="match status" value="1"/>
</dbReference>
<dbReference type="SUPFAM" id="SSF47144">
    <property type="entry name" value="HSC20 (HSCB), C-terminal oligomerisation domain"/>
    <property type="match status" value="1"/>
</dbReference>
<dbReference type="PROSITE" id="PS50076">
    <property type="entry name" value="DNAJ_2"/>
    <property type="match status" value="1"/>
</dbReference>
<proteinExistence type="inferred from homology"/>
<evidence type="ECO:0000255" key="1">
    <source>
        <dbReference type="HAMAP-Rule" id="MF_00682"/>
    </source>
</evidence>
<gene>
    <name evidence="1" type="primary">hscB</name>
    <name type="ordered locus">SSON_2609</name>
</gene>
<name>HSCB_SHISS</name>
<feature type="chain" id="PRO_1000083050" description="Co-chaperone protein HscB">
    <location>
        <begin position="1"/>
        <end position="171"/>
    </location>
</feature>
<feature type="domain" description="J" evidence="1">
    <location>
        <begin position="2"/>
        <end position="74"/>
    </location>
</feature>
<protein>
    <recommendedName>
        <fullName evidence="1">Co-chaperone protein HscB</fullName>
    </recommendedName>
    <alternativeName>
        <fullName evidence="1">Hsc20</fullName>
    </alternativeName>
</protein>
<accession>Q3YZ25</accession>
<keyword id="KW-0143">Chaperone</keyword>
<keyword id="KW-1185">Reference proteome</keyword>
<sequence length="171" mass="20142">MDYFTFFGLPARYQLDTQALSLRFQDLQRQYHPDKFASGSQAEQLAAVQQSATINQAWQTLRHPLMRAEYLLSLHGFDLASEQHTVRDTAFLMEQLELREELDEIEQAKDEARLESFIKRVKKMFDTRHQLMVEQLDNEAWDAAADTVRKLRFLDKLRSSAEQLEEKLLDF</sequence>
<reference key="1">
    <citation type="journal article" date="2005" name="Nucleic Acids Res.">
        <title>Genome dynamics and diversity of Shigella species, the etiologic agents of bacillary dysentery.</title>
        <authorList>
            <person name="Yang F."/>
            <person name="Yang J."/>
            <person name="Zhang X."/>
            <person name="Chen L."/>
            <person name="Jiang Y."/>
            <person name="Yan Y."/>
            <person name="Tang X."/>
            <person name="Wang J."/>
            <person name="Xiong Z."/>
            <person name="Dong J."/>
            <person name="Xue Y."/>
            <person name="Zhu Y."/>
            <person name="Xu X."/>
            <person name="Sun L."/>
            <person name="Chen S."/>
            <person name="Nie H."/>
            <person name="Peng J."/>
            <person name="Xu J."/>
            <person name="Wang Y."/>
            <person name="Yuan Z."/>
            <person name="Wen Y."/>
            <person name="Yao Z."/>
            <person name="Shen Y."/>
            <person name="Qiang B."/>
            <person name="Hou Y."/>
            <person name="Yu J."/>
            <person name="Jin Q."/>
        </authorList>
    </citation>
    <scope>NUCLEOTIDE SEQUENCE [LARGE SCALE GENOMIC DNA]</scope>
    <source>
        <strain>Ss046</strain>
    </source>
</reference>
<comment type="function">
    <text evidence="1">Co-chaperone involved in the maturation of iron-sulfur cluster-containing proteins. Seems to help targeting proteins to be folded toward HscA.</text>
</comment>
<comment type="subunit">
    <text evidence="1">Interacts with HscA and stimulates its ATPase activity. Interacts with IscU.</text>
</comment>
<comment type="similarity">
    <text evidence="1">Belongs to the HscB family.</text>
</comment>
<organism>
    <name type="scientific">Shigella sonnei (strain Ss046)</name>
    <dbReference type="NCBI Taxonomy" id="300269"/>
    <lineage>
        <taxon>Bacteria</taxon>
        <taxon>Pseudomonadati</taxon>
        <taxon>Pseudomonadota</taxon>
        <taxon>Gammaproteobacteria</taxon>
        <taxon>Enterobacterales</taxon>
        <taxon>Enterobacteriaceae</taxon>
        <taxon>Shigella</taxon>
    </lineage>
</organism>